<sequence>MFSFEKNSLKNTDKEIFDAIELEVKRQHEHVELIASENYASPAVMEAQGSQLTNKYAEGYHGKRYYGGCEFVDIAEKLAIERAQKLFGVDYANVQPHSGSQANAAVYNAVLKPGDTVLGMDLGAGGHLTHGSKVNFSGKIYNSIQYGLSESGDIDYKQVAELAKEHKPKMIIAGFSAFSGIIDWKKFREIADSVDAVLMADIAHVAGLVAAGLYPNPFPYVDVATTTTHKTLRGPRGGLILCNDNPDLAKKFQSAIFPGIQGGPLMHVIAAKAVAFKEALEPSFIDYQKQVLINAKAMEKVLKERNINIISGGTNNHLLLLDITNTGFSGKEAEAALGRANITVNKNSIPNDPRSPFVTSGLRIGSPAITTRGFKEAECEQIANWLADVVYNCGNEKVENETATKVSELCDRFPVYK</sequence>
<organism>
    <name type="scientific">Francisella philomiragia subsp. philomiragia (strain ATCC 25017 / CCUG 19701 / FSC 153 / O#319-036)</name>
    <dbReference type="NCBI Taxonomy" id="484022"/>
    <lineage>
        <taxon>Bacteria</taxon>
        <taxon>Pseudomonadati</taxon>
        <taxon>Pseudomonadota</taxon>
        <taxon>Gammaproteobacteria</taxon>
        <taxon>Thiotrichales</taxon>
        <taxon>Francisellaceae</taxon>
        <taxon>Francisella</taxon>
    </lineage>
</organism>
<name>GLYA_FRAP2</name>
<proteinExistence type="inferred from homology"/>
<keyword id="KW-0028">Amino-acid biosynthesis</keyword>
<keyword id="KW-0963">Cytoplasm</keyword>
<keyword id="KW-0554">One-carbon metabolism</keyword>
<keyword id="KW-0663">Pyridoxal phosphate</keyword>
<keyword id="KW-0808">Transferase</keyword>
<reference key="1">
    <citation type="submission" date="2007-12" db="EMBL/GenBank/DDBJ databases">
        <title>Complete sequence of chromosome of Francisella philomiragia subsp. philomiragia ATCC 25017.</title>
        <authorList>
            <consortium name="US DOE Joint Genome Institute"/>
            <person name="Copeland A."/>
            <person name="Lucas S."/>
            <person name="Lapidus A."/>
            <person name="Barry K."/>
            <person name="Detter J.C."/>
            <person name="Glavina del Rio T."/>
            <person name="Hammon N."/>
            <person name="Israni S."/>
            <person name="Dalin E."/>
            <person name="Tice H."/>
            <person name="Pitluck S."/>
            <person name="Chain P."/>
            <person name="Malfatti S."/>
            <person name="Shin M."/>
            <person name="Vergez L."/>
            <person name="Schmutz J."/>
            <person name="Larimer F."/>
            <person name="Land M."/>
            <person name="Hauser L."/>
            <person name="Richardson P."/>
        </authorList>
    </citation>
    <scope>NUCLEOTIDE SEQUENCE [LARGE SCALE GENOMIC DNA]</scope>
    <source>
        <strain>ATCC 25017 / CCUG 19701 / FSC 153 / O#319-036</strain>
    </source>
</reference>
<dbReference type="EC" id="2.1.2.1" evidence="1"/>
<dbReference type="EMBL" id="CP000937">
    <property type="protein sequence ID" value="ABZ87649.1"/>
    <property type="molecule type" value="Genomic_DNA"/>
</dbReference>
<dbReference type="SMR" id="B0TYH3"/>
<dbReference type="KEGG" id="fph:Fphi_1424"/>
<dbReference type="eggNOG" id="COG0112">
    <property type="taxonomic scope" value="Bacteria"/>
</dbReference>
<dbReference type="HOGENOM" id="CLU_022477_2_1_6"/>
<dbReference type="UniPathway" id="UPA00193"/>
<dbReference type="UniPathway" id="UPA00288">
    <property type="reaction ID" value="UER01023"/>
</dbReference>
<dbReference type="GO" id="GO:0005829">
    <property type="term" value="C:cytosol"/>
    <property type="evidence" value="ECO:0007669"/>
    <property type="project" value="TreeGrafter"/>
</dbReference>
<dbReference type="GO" id="GO:0004372">
    <property type="term" value="F:glycine hydroxymethyltransferase activity"/>
    <property type="evidence" value="ECO:0007669"/>
    <property type="project" value="UniProtKB-UniRule"/>
</dbReference>
<dbReference type="GO" id="GO:0030170">
    <property type="term" value="F:pyridoxal phosphate binding"/>
    <property type="evidence" value="ECO:0007669"/>
    <property type="project" value="UniProtKB-UniRule"/>
</dbReference>
<dbReference type="GO" id="GO:0019264">
    <property type="term" value="P:glycine biosynthetic process from serine"/>
    <property type="evidence" value="ECO:0007669"/>
    <property type="project" value="UniProtKB-UniRule"/>
</dbReference>
<dbReference type="GO" id="GO:0035999">
    <property type="term" value="P:tetrahydrofolate interconversion"/>
    <property type="evidence" value="ECO:0007669"/>
    <property type="project" value="UniProtKB-UniRule"/>
</dbReference>
<dbReference type="CDD" id="cd00378">
    <property type="entry name" value="SHMT"/>
    <property type="match status" value="1"/>
</dbReference>
<dbReference type="FunFam" id="3.40.640.10:FF:000001">
    <property type="entry name" value="Serine hydroxymethyltransferase"/>
    <property type="match status" value="1"/>
</dbReference>
<dbReference type="FunFam" id="3.90.1150.10:FF:000003">
    <property type="entry name" value="Serine hydroxymethyltransferase"/>
    <property type="match status" value="1"/>
</dbReference>
<dbReference type="Gene3D" id="3.90.1150.10">
    <property type="entry name" value="Aspartate Aminotransferase, domain 1"/>
    <property type="match status" value="1"/>
</dbReference>
<dbReference type="Gene3D" id="3.40.640.10">
    <property type="entry name" value="Type I PLP-dependent aspartate aminotransferase-like (Major domain)"/>
    <property type="match status" value="1"/>
</dbReference>
<dbReference type="HAMAP" id="MF_00051">
    <property type="entry name" value="SHMT"/>
    <property type="match status" value="1"/>
</dbReference>
<dbReference type="InterPro" id="IPR015424">
    <property type="entry name" value="PyrdxlP-dep_Trfase"/>
</dbReference>
<dbReference type="InterPro" id="IPR015421">
    <property type="entry name" value="PyrdxlP-dep_Trfase_major"/>
</dbReference>
<dbReference type="InterPro" id="IPR015422">
    <property type="entry name" value="PyrdxlP-dep_Trfase_small"/>
</dbReference>
<dbReference type="InterPro" id="IPR001085">
    <property type="entry name" value="Ser_HO-MeTrfase"/>
</dbReference>
<dbReference type="InterPro" id="IPR049943">
    <property type="entry name" value="Ser_HO-MeTrfase-like"/>
</dbReference>
<dbReference type="InterPro" id="IPR019798">
    <property type="entry name" value="Ser_HO-MeTrfase_PLP_BS"/>
</dbReference>
<dbReference type="InterPro" id="IPR039429">
    <property type="entry name" value="SHMT-like_dom"/>
</dbReference>
<dbReference type="NCBIfam" id="NF000586">
    <property type="entry name" value="PRK00011.1"/>
    <property type="match status" value="1"/>
</dbReference>
<dbReference type="PANTHER" id="PTHR11680">
    <property type="entry name" value="SERINE HYDROXYMETHYLTRANSFERASE"/>
    <property type="match status" value="1"/>
</dbReference>
<dbReference type="PANTHER" id="PTHR11680:SF50">
    <property type="entry name" value="SERINE HYDROXYMETHYLTRANSFERASE"/>
    <property type="match status" value="1"/>
</dbReference>
<dbReference type="Pfam" id="PF00464">
    <property type="entry name" value="SHMT"/>
    <property type="match status" value="1"/>
</dbReference>
<dbReference type="PIRSF" id="PIRSF000412">
    <property type="entry name" value="SHMT"/>
    <property type="match status" value="1"/>
</dbReference>
<dbReference type="SUPFAM" id="SSF53383">
    <property type="entry name" value="PLP-dependent transferases"/>
    <property type="match status" value="1"/>
</dbReference>
<dbReference type="PROSITE" id="PS00096">
    <property type="entry name" value="SHMT"/>
    <property type="match status" value="1"/>
</dbReference>
<accession>B0TYH3</accession>
<gene>
    <name evidence="1" type="primary">glyA</name>
    <name type="ordered locus">Fphi_1424</name>
</gene>
<evidence type="ECO:0000255" key="1">
    <source>
        <dbReference type="HAMAP-Rule" id="MF_00051"/>
    </source>
</evidence>
<feature type="chain" id="PRO_1000074897" description="Serine hydroxymethyltransferase">
    <location>
        <begin position="1"/>
        <end position="417"/>
    </location>
</feature>
<feature type="binding site" evidence="1">
    <location>
        <position position="122"/>
    </location>
    <ligand>
        <name>(6S)-5,6,7,8-tetrahydrofolate</name>
        <dbReference type="ChEBI" id="CHEBI:57453"/>
    </ligand>
</feature>
<feature type="binding site" evidence="1">
    <location>
        <begin position="126"/>
        <end position="128"/>
    </location>
    <ligand>
        <name>(6S)-5,6,7,8-tetrahydrofolate</name>
        <dbReference type="ChEBI" id="CHEBI:57453"/>
    </ligand>
</feature>
<feature type="binding site" evidence="1">
    <location>
        <begin position="355"/>
        <end position="357"/>
    </location>
    <ligand>
        <name>(6S)-5,6,7,8-tetrahydrofolate</name>
        <dbReference type="ChEBI" id="CHEBI:57453"/>
    </ligand>
</feature>
<feature type="site" description="Plays an important role in substrate specificity" evidence="1">
    <location>
        <position position="229"/>
    </location>
</feature>
<feature type="modified residue" description="N6-(pyridoxal phosphate)lysine" evidence="1">
    <location>
        <position position="230"/>
    </location>
</feature>
<comment type="function">
    <text evidence="1">Catalyzes the reversible interconversion of serine and glycine with tetrahydrofolate (THF) serving as the one-carbon carrier. This reaction serves as the major source of one-carbon groups required for the biosynthesis of purines, thymidylate, methionine, and other important biomolecules. Also exhibits THF-independent aldolase activity toward beta-hydroxyamino acids, producing glycine and aldehydes, via a retro-aldol mechanism.</text>
</comment>
<comment type="catalytic activity">
    <reaction evidence="1">
        <text>(6R)-5,10-methylene-5,6,7,8-tetrahydrofolate + glycine + H2O = (6S)-5,6,7,8-tetrahydrofolate + L-serine</text>
        <dbReference type="Rhea" id="RHEA:15481"/>
        <dbReference type="ChEBI" id="CHEBI:15377"/>
        <dbReference type="ChEBI" id="CHEBI:15636"/>
        <dbReference type="ChEBI" id="CHEBI:33384"/>
        <dbReference type="ChEBI" id="CHEBI:57305"/>
        <dbReference type="ChEBI" id="CHEBI:57453"/>
        <dbReference type="EC" id="2.1.2.1"/>
    </reaction>
</comment>
<comment type="cofactor">
    <cofactor evidence="1">
        <name>pyridoxal 5'-phosphate</name>
        <dbReference type="ChEBI" id="CHEBI:597326"/>
    </cofactor>
</comment>
<comment type="pathway">
    <text evidence="1">One-carbon metabolism; tetrahydrofolate interconversion.</text>
</comment>
<comment type="pathway">
    <text evidence="1">Amino-acid biosynthesis; glycine biosynthesis; glycine from L-serine: step 1/1.</text>
</comment>
<comment type="subunit">
    <text evidence="1">Homodimer.</text>
</comment>
<comment type="subcellular location">
    <subcellularLocation>
        <location evidence="1">Cytoplasm</location>
    </subcellularLocation>
</comment>
<comment type="similarity">
    <text evidence="1">Belongs to the SHMT family.</text>
</comment>
<protein>
    <recommendedName>
        <fullName evidence="1">Serine hydroxymethyltransferase</fullName>
        <shortName evidence="1">SHMT</shortName>
        <shortName evidence="1">Serine methylase</shortName>
        <ecNumber evidence="1">2.1.2.1</ecNumber>
    </recommendedName>
</protein>